<sequence length="564" mass="62444">MIRQCVSHRGIPCYRLAVRRVELTEPFHHPSPRPLGRKNWSTSDEAKSKRAAMRKGGAPPPEHEDWELTVGIEIHAQLDTDAKLFSRASAALDDVPNSNIALFDIALPGSQPLFQPSTLIPAIRAAIALNCDIQRIRGQRIYELTHRLIEPYAKNGSIWLGAHDGIAKEDGEGVQIGIKQIQMEQDTAKSQELPSSTYLLDFNRVSRPLIEIITLPQIHSATTAAACVRKIQAILQSVGAVTTGMEMGGLRADVNVSVRKRSEAAGDHQYDGVAGLGQRTEIKNLSSFKAVEYAIIAERDRQIAVLKAGGTIQGETRGWTLGSTETRKLRGKEGEVDYRYMPDPDLGPVIIGDDVISDLRRNIPVLPDELLQMLVQDPKYGLSTVDAKTLIELDDGQRLEYYQDAVEILITLQPDLSADFSAGKVVGNWVLHELGGLLTKSSAHWDSQRVPAQSLAEIINLLSRKNITSSSAKSLLAMAFDGDKRSISQIVEDKNLLFQSLSRHEYIALAEEVMRQNPKMVSEIREKGQLGKMGWFVGQIKRIGDPNRVEAQKAEEILRELILK</sequence>
<reference key="1">
    <citation type="submission" date="2009-02" db="EMBL/GenBank/DDBJ databases">
        <title>The genome sequence of Ajellomyces capsulatus strain G186AR.</title>
        <authorList>
            <person name="Champion M."/>
            <person name="Cuomo C.A."/>
            <person name="Ma L.-J."/>
            <person name="Henn M.R."/>
            <person name="Sil A."/>
            <person name="Goldman B."/>
            <person name="Young S.K."/>
            <person name="Kodira C.D."/>
            <person name="Zeng Q."/>
            <person name="Koehrsen M."/>
            <person name="Alvarado L."/>
            <person name="Berlin A."/>
            <person name="Borenstein D."/>
            <person name="Chen Z."/>
            <person name="Engels R."/>
            <person name="Freedman E."/>
            <person name="Gellesch M."/>
            <person name="Goldberg J."/>
            <person name="Griggs A."/>
            <person name="Gujja S."/>
            <person name="Heiman D."/>
            <person name="Hepburn T."/>
            <person name="Howarth C."/>
            <person name="Jen D."/>
            <person name="Larson L."/>
            <person name="Lewis B."/>
            <person name="Mehta T."/>
            <person name="Park D."/>
            <person name="Pearson M."/>
            <person name="Roberts A."/>
            <person name="Saif S."/>
            <person name="Shea T."/>
            <person name="Shenoy N."/>
            <person name="Sisk P."/>
            <person name="Stolte C."/>
            <person name="Sykes S."/>
            <person name="Walk T."/>
            <person name="White J."/>
            <person name="Yandava C."/>
            <person name="Klein B."/>
            <person name="McEwen J.G."/>
            <person name="Puccia R."/>
            <person name="Goldman G.H."/>
            <person name="Felipe M.S."/>
            <person name="Nino-Vega G."/>
            <person name="San-Blas G."/>
            <person name="Taylor J."/>
            <person name="Mendoza L."/>
            <person name="Galagan J.E."/>
            <person name="Nusbaum C."/>
            <person name="Birren B.W."/>
        </authorList>
    </citation>
    <scope>NUCLEOTIDE SEQUENCE [LARGE SCALE GENOMIC DNA]</scope>
    <source>
        <strain>G186AR / H82 / ATCC MYA-2454 / RMSCC 2432</strain>
    </source>
</reference>
<proteinExistence type="inferred from homology"/>
<name>GATB_AJECG</name>
<evidence type="ECO:0000250" key="1"/>
<evidence type="ECO:0000255" key="2"/>
<evidence type="ECO:0000256" key="3">
    <source>
        <dbReference type="SAM" id="MobiDB-lite"/>
    </source>
</evidence>
<evidence type="ECO:0000305" key="4"/>
<dbReference type="EC" id="6.3.5.-"/>
<dbReference type="EMBL" id="GG663372">
    <property type="protein sequence ID" value="EEH04822.1"/>
    <property type="status" value="ALT_INIT"/>
    <property type="molecule type" value="Genomic_DNA"/>
</dbReference>
<dbReference type="SMR" id="C0NV09"/>
<dbReference type="FunCoup" id="C0NV09">
    <property type="interactions" value="338"/>
</dbReference>
<dbReference type="STRING" id="447093.C0NV09"/>
<dbReference type="VEuPathDB" id="FungiDB:I7I50_12433"/>
<dbReference type="HOGENOM" id="CLU_019240_4_1_1"/>
<dbReference type="InParanoid" id="C0NV09"/>
<dbReference type="Proteomes" id="UP000001631">
    <property type="component" value="Unassembled WGS sequence"/>
</dbReference>
<dbReference type="GO" id="GO:0030956">
    <property type="term" value="C:glutamyl-tRNA(Gln) amidotransferase complex"/>
    <property type="evidence" value="ECO:0007669"/>
    <property type="project" value="UniProtKB-UniRule"/>
</dbReference>
<dbReference type="GO" id="GO:0005739">
    <property type="term" value="C:mitochondrion"/>
    <property type="evidence" value="ECO:0007669"/>
    <property type="project" value="UniProtKB-SubCell"/>
</dbReference>
<dbReference type="GO" id="GO:0005524">
    <property type="term" value="F:ATP binding"/>
    <property type="evidence" value="ECO:0007669"/>
    <property type="project" value="UniProtKB-KW"/>
</dbReference>
<dbReference type="GO" id="GO:0050567">
    <property type="term" value="F:glutaminyl-tRNA synthase (glutamine-hydrolyzing) activity"/>
    <property type="evidence" value="ECO:0007669"/>
    <property type="project" value="UniProtKB-UniRule"/>
</dbReference>
<dbReference type="GO" id="GO:0070681">
    <property type="term" value="P:glutaminyl-tRNAGln biosynthesis via transamidation"/>
    <property type="evidence" value="ECO:0007669"/>
    <property type="project" value="UniProtKB-UniRule"/>
</dbReference>
<dbReference type="GO" id="GO:0032543">
    <property type="term" value="P:mitochondrial translation"/>
    <property type="evidence" value="ECO:0007669"/>
    <property type="project" value="UniProtKB-UniRule"/>
</dbReference>
<dbReference type="Gene3D" id="1.10.10.410">
    <property type="match status" value="1"/>
</dbReference>
<dbReference type="InterPro" id="IPR017959">
    <property type="entry name" value="Asn/Gln-tRNA_amidoTrfase_suB/E"/>
</dbReference>
<dbReference type="InterPro" id="IPR006075">
    <property type="entry name" value="Asn/Gln-tRNA_Trfase_suB/E_cat"/>
</dbReference>
<dbReference type="InterPro" id="IPR018027">
    <property type="entry name" value="Asn/Gln_amidotransferase"/>
</dbReference>
<dbReference type="InterPro" id="IPR003789">
    <property type="entry name" value="Asn/Gln_tRNA_amidoTrase-B-like"/>
</dbReference>
<dbReference type="InterPro" id="IPR004413">
    <property type="entry name" value="GatB"/>
</dbReference>
<dbReference type="InterPro" id="IPR023168">
    <property type="entry name" value="GatB_Yqey_C_2"/>
</dbReference>
<dbReference type="InterPro" id="IPR017958">
    <property type="entry name" value="Gln-tRNA_amidoTrfase_suB_CS"/>
</dbReference>
<dbReference type="InterPro" id="IPR014746">
    <property type="entry name" value="Gln_synth/guanido_kin_cat_dom"/>
</dbReference>
<dbReference type="PANTHER" id="PTHR11659">
    <property type="entry name" value="GLUTAMYL-TRNA GLN AMIDOTRANSFERASE SUBUNIT B MITOCHONDRIAL AND PROKARYOTIC PET112-RELATED"/>
    <property type="match status" value="1"/>
</dbReference>
<dbReference type="PANTHER" id="PTHR11659:SF0">
    <property type="entry name" value="GLUTAMYL-TRNA(GLN) AMIDOTRANSFERASE SUBUNIT B, MITOCHONDRIAL"/>
    <property type="match status" value="1"/>
</dbReference>
<dbReference type="Pfam" id="PF02934">
    <property type="entry name" value="GatB_N"/>
    <property type="match status" value="1"/>
</dbReference>
<dbReference type="Pfam" id="PF02637">
    <property type="entry name" value="GatB_Yqey"/>
    <property type="match status" value="1"/>
</dbReference>
<dbReference type="SMART" id="SM00845">
    <property type="entry name" value="GatB_Yqey"/>
    <property type="match status" value="1"/>
</dbReference>
<dbReference type="SUPFAM" id="SSF89095">
    <property type="entry name" value="GatB/YqeY motif"/>
    <property type="match status" value="1"/>
</dbReference>
<dbReference type="SUPFAM" id="SSF55931">
    <property type="entry name" value="Glutamine synthetase/guanido kinase"/>
    <property type="match status" value="1"/>
</dbReference>
<dbReference type="PROSITE" id="PS01234">
    <property type="entry name" value="GATB"/>
    <property type="match status" value="1"/>
</dbReference>
<organism>
    <name type="scientific">Ajellomyces capsulatus (strain G186AR / H82 / ATCC MYA-2454 / RMSCC 2432)</name>
    <name type="common">Darling's disease fungus</name>
    <name type="synonym">Histoplasma capsulatum</name>
    <dbReference type="NCBI Taxonomy" id="447093"/>
    <lineage>
        <taxon>Eukaryota</taxon>
        <taxon>Fungi</taxon>
        <taxon>Dikarya</taxon>
        <taxon>Ascomycota</taxon>
        <taxon>Pezizomycotina</taxon>
        <taxon>Eurotiomycetes</taxon>
        <taxon>Eurotiomycetidae</taxon>
        <taxon>Onygenales</taxon>
        <taxon>Ajellomycetaceae</taxon>
        <taxon>Histoplasma</taxon>
    </lineage>
</organism>
<feature type="transit peptide" description="Mitochondrion" evidence="2">
    <location>
        <begin position="1"/>
        <end position="88"/>
    </location>
</feature>
<feature type="chain" id="PRO_0000413238" description="Glutamyl-tRNA(Gln) amidotransferase subunit B, mitochondrial">
    <location>
        <begin position="89"/>
        <end position="564"/>
    </location>
</feature>
<feature type="region of interest" description="Disordered" evidence="3">
    <location>
        <begin position="26"/>
        <end position="63"/>
    </location>
</feature>
<keyword id="KW-0067">ATP-binding</keyword>
<keyword id="KW-0436">Ligase</keyword>
<keyword id="KW-0496">Mitochondrion</keyword>
<keyword id="KW-0547">Nucleotide-binding</keyword>
<keyword id="KW-0648">Protein biosynthesis</keyword>
<keyword id="KW-1185">Reference proteome</keyword>
<keyword id="KW-0809">Transit peptide</keyword>
<comment type="function">
    <text evidence="1">Allows the formation of correctly charged Gln-tRNA(Gln) through the transamidation of misacylated Glu-tRNA(Gln) in the mitochondria. The reaction takes place in the presence of glutamine and ATP through an activated gamma-phospho-Glu-tRNA(Gln) (By similarity).</text>
</comment>
<comment type="catalytic activity">
    <reaction>
        <text>L-glutamyl-tRNA(Gln) + L-glutamine + ATP + H2O = L-glutaminyl-tRNA(Gln) + L-glutamate + ADP + phosphate + H(+)</text>
        <dbReference type="Rhea" id="RHEA:17521"/>
        <dbReference type="Rhea" id="RHEA-COMP:9681"/>
        <dbReference type="Rhea" id="RHEA-COMP:9684"/>
        <dbReference type="ChEBI" id="CHEBI:15377"/>
        <dbReference type="ChEBI" id="CHEBI:15378"/>
        <dbReference type="ChEBI" id="CHEBI:29985"/>
        <dbReference type="ChEBI" id="CHEBI:30616"/>
        <dbReference type="ChEBI" id="CHEBI:43474"/>
        <dbReference type="ChEBI" id="CHEBI:58359"/>
        <dbReference type="ChEBI" id="CHEBI:78520"/>
        <dbReference type="ChEBI" id="CHEBI:78521"/>
        <dbReference type="ChEBI" id="CHEBI:456216"/>
    </reaction>
</comment>
<comment type="subunit">
    <text evidence="1">Subunit of the heterotrimeric GatCAB amidotransferase (AdT) complex, composed of A, B and C subunits.</text>
</comment>
<comment type="subcellular location">
    <subcellularLocation>
        <location evidence="4">Mitochondrion</location>
    </subcellularLocation>
</comment>
<comment type="similarity">
    <text evidence="4">Belongs to the GatB/GatE family. GatB subfamily.</text>
</comment>
<comment type="sequence caution" evidence="4">
    <conflict type="erroneous initiation">
        <sequence resource="EMBL-CDS" id="EEH04822"/>
    </conflict>
    <text>Extended N-terminus.</text>
</comment>
<accession>C0NV09</accession>
<gene>
    <name type="ORF">HCBG_06773</name>
</gene>
<protein>
    <recommendedName>
        <fullName>Glutamyl-tRNA(Gln) amidotransferase subunit B, mitochondrial</fullName>
        <shortName>Glu-AdT subunit B</shortName>
        <ecNumber>6.3.5.-</ecNumber>
    </recommendedName>
</protein>